<proteinExistence type="inferred from homology"/>
<name>BBP_ASPFU</name>
<reference key="1">
    <citation type="journal article" date="2005" name="Nature">
        <title>Genomic sequence of the pathogenic and allergenic filamentous fungus Aspergillus fumigatus.</title>
        <authorList>
            <person name="Nierman W.C."/>
            <person name="Pain A."/>
            <person name="Anderson M.J."/>
            <person name="Wortman J.R."/>
            <person name="Kim H.S."/>
            <person name="Arroyo J."/>
            <person name="Berriman M."/>
            <person name="Abe K."/>
            <person name="Archer D.B."/>
            <person name="Bermejo C."/>
            <person name="Bennett J.W."/>
            <person name="Bowyer P."/>
            <person name="Chen D."/>
            <person name="Collins M."/>
            <person name="Coulsen R."/>
            <person name="Davies R."/>
            <person name="Dyer P.S."/>
            <person name="Farman M.L."/>
            <person name="Fedorova N."/>
            <person name="Fedorova N.D."/>
            <person name="Feldblyum T.V."/>
            <person name="Fischer R."/>
            <person name="Fosker N."/>
            <person name="Fraser A."/>
            <person name="Garcia J.L."/>
            <person name="Garcia M.J."/>
            <person name="Goble A."/>
            <person name="Goldman G.H."/>
            <person name="Gomi K."/>
            <person name="Griffith-Jones S."/>
            <person name="Gwilliam R."/>
            <person name="Haas B.J."/>
            <person name="Haas H."/>
            <person name="Harris D.E."/>
            <person name="Horiuchi H."/>
            <person name="Huang J."/>
            <person name="Humphray S."/>
            <person name="Jimenez J."/>
            <person name="Keller N."/>
            <person name="Khouri H."/>
            <person name="Kitamoto K."/>
            <person name="Kobayashi T."/>
            <person name="Konzack S."/>
            <person name="Kulkarni R."/>
            <person name="Kumagai T."/>
            <person name="Lafton A."/>
            <person name="Latge J.-P."/>
            <person name="Li W."/>
            <person name="Lord A."/>
            <person name="Lu C."/>
            <person name="Majoros W.H."/>
            <person name="May G.S."/>
            <person name="Miller B.L."/>
            <person name="Mohamoud Y."/>
            <person name="Molina M."/>
            <person name="Monod M."/>
            <person name="Mouyna I."/>
            <person name="Mulligan S."/>
            <person name="Murphy L.D."/>
            <person name="O'Neil S."/>
            <person name="Paulsen I."/>
            <person name="Penalva M.A."/>
            <person name="Pertea M."/>
            <person name="Price C."/>
            <person name="Pritchard B.L."/>
            <person name="Quail M.A."/>
            <person name="Rabbinowitsch E."/>
            <person name="Rawlins N."/>
            <person name="Rajandream M.A."/>
            <person name="Reichard U."/>
            <person name="Renauld H."/>
            <person name="Robson G.D."/>
            <person name="Rodriguez de Cordoba S."/>
            <person name="Rodriguez-Pena J.M."/>
            <person name="Ronning C.M."/>
            <person name="Rutter S."/>
            <person name="Salzberg S.L."/>
            <person name="Sanchez M."/>
            <person name="Sanchez-Ferrero J.C."/>
            <person name="Saunders D."/>
            <person name="Seeger K."/>
            <person name="Squares R."/>
            <person name="Squares S."/>
            <person name="Takeuchi M."/>
            <person name="Tekaia F."/>
            <person name="Turner G."/>
            <person name="Vazquez de Aldana C.R."/>
            <person name="Weidman J."/>
            <person name="White O."/>
            <person name="Woodward J.R."/>
            <person name="Yu J.-H."/>
            <person name="Fraser C.M."/>
            <person name="Galagan J.E."/>
            <person name="Asai K."/>
            <person name="Machida M."/>
            <person name="Hall N."/>
            <person name="Barrell B.G."/>
            <person name="Denning D.W."/>
        </authorList>
    </citation>
    <scope>NUCLEOTIDE SEQUENCE [LARGE SCALE GENOMIC DNA]</scope>
    <source>
        <strain>ATCC MYA-4609 / CBS 101355 / FGSC A1100 / Af293</strain>
    </source>
</reference>
<keyword id="KW-0479">Metal-binding</keyword>
<keyword id="KW-0507">mRNA processing</keyword>
<keyword id="KW-0508">mRNA splicing</keyword>
<keyword id="KW-0539">Nucleus</keyword>
<keyword id="KW-1185">Reference proteome</keyword>
<keyword id="KW-0677">Repeat</keyword>
<keyword id="KW-0694">RNA-binding</keyword>
<keyword id="KW-0747">Spliceosome</keyword>
<keyword id="KW-0862">Zinc</keyword>
<keyword id="KW-0863">Zinc-finger</keyword>
<gene>
    <name type="primary">bbp</name>
    <name type="ORF">AFUA_3G10840</name>
</gene>
<accession>Q4WXV6</accession>
<feature type="chain" id="PRO_0000256144" description="Branchpoint-bridging protein">
    <location>
        <begin position="1"/>
        <end position="566"/>
    </location>
</feature>
<feature type="domain" description="KH" evidence="3">
    <location>
        <begin position="186"/>
        <end position="266"/>
    </location>
</feature>
<feature type="zinc finger region" description="CCHC-type 1" evidence="2">
    <location>
        <begin position="304"/>
        <end position="321"/>
    </location>
</feature>
<feature type="zinc finger region" description="CCHC-type 2" evidence="2">
    <location>
        <begin position="329"/>
        <end position="346"/>
    </location>
</feature>
<feature type="region of interest" description="Disordered" evidence="4">
    <location>
        <begin position="1"/>
        <end position="77"/>
    </location>
</feature>
<feature type="region of interest" description="Disordered" evidence="4">
    <location>
        <begin position="341"/>
        <end position="367"/>
    </location>
</feature>
<feature type="region of interest" description="Disordered" evidence="4">
    <location>
        <begin position="382"/>
        <end position="566"/>
    </location>
</feature>
<feature type="compositionally biased region" description="Polar residues" evidence="4">
    <location>
        <begin position="1"/>
        <end position="14"/>
    </location>
</feature>
<feature type="compositionally biased region" description="Basic and acidic residues" evidence="4">
    <location>
        <begin position="341"/>
        <end position="352"/>
    </location>
</feature>
<feature type="compositionally biased region" description="Gly residues" evidence="4">
    <location>
        <begin position="355"/>
        <end position="364"/>
    </location>
</feature>
<feature type="compositionally biased region" description="Basic and acidic residues" evidence="4">
    <location>
        <begin position="394"/>
        <end position="413"/>
    </location>
</feature>
<feature type="compositionally biased region" description="Basic and acidic residues" evidence="4">
    <location>
        <begin position="429"/>
        <end position="441"/>
    </location>
</feature>
<feature type="compositionally biased region" description="Gly residues" evidence="4">
    <location>
        <begin position="457"/>
        <end position="472"/>
    </location>
</feature>
<feature type="compositionally biased region" description="Low complexity" evidence="4">
    <location>
        <begin position="473"/>
        <end position="486"/>
    </location>
</feature>
<feature type="compositionally biased region" description="Low complexity" evidence="4">
    <location>
        <begin position="494"/>
        <end position="513"/>
    </location>
</feature>
<feature type="compositionally biased region" description="Pro residues" evidence="4">
    <location>
        <begin position="517"/>
        <end position="531"/>
    </location>
</feature>
<feature type="compositionally biased region" description="Pro residues" evidence="4">
    <location>
        <begin position="540"/>
        <end position="566"/>
    </location>
</feature>
<evidence type="ECO:0000250" key="1"/>
<evidence type="ECO:0000255" key="2">
    <source>
        <dbReference type="PROSITE-ProRule" id="PRU00047"/>
    </source>
</evidence>
<evidence type="ECO:0000255" key="3">
    <source>
        <dbReference type="PROSITE-ProRule" id="PRU00117"/>
    </source>
</evidence>
<evidence type="ECO:0000256" key="4">
    <source>
        <dbReference type="SAM" id="MobiDB-lite"/>
    </source>
</evidence>
<evidence type="ECO:0000305" key="5"/>
<comment type="function">
    <text evidence="1">Necessary for the splicing of pre-mRNA. Has a role in the recognition of the branch site (5'-UACUAAC-3'), the pyrimidine tract and the 3'-splice site at the 3'-end of introns (By similarity).</text>
</comment>
<comment type="subcellular location">
    <subcellularLocation>
        <location evidence="1">Nucleus</location>
    </subcellularLocation>
</comment>
<comment type="similarity">
    <text evidence="5">Belongs to the BBP/SF1 family.</text>
</comment>
<sequence>MAWRNQGITGSNNIPLGRRRFGGEDGPEEESRTATPASVGGDNGIKRGRSPVRADPPADGVKRRKKRNRWGDAQENKAAGLMGLPTMIMANFTNEQLEAYTLHLRIEEISQKLRINDVVPADGDRSPSPPPQYDNFGRRVNTREYRYRKRLEDERHKLVEKAMKTIPNYHPPSDYRRPTKTQEKVYVPVNDYPEINFIGLLIGPRGNTLKKMEAESGAKIAIRGKGSVKEGKGRSDAAHASNQEEDLHCLIMADTEEKVNKAKKLVHNVIETAASIPEGQNELKRNQLRELAALNGTLRDDENQACQNCGQIGHRKYDCPEQRNFTANIICRVCGNAGHMARDCPDRQRGSDWRNGGGYGGGRRAIGQGDAVDREMEQLMQELSGGAPGPDGQPPRRIEAGPDHGYDDRDVKPWQRGPPPSDVAPWQQRGRDNRSRDDYGSRDQGSAPPWAAQSRGGDYGYGSHAGGYGAPGAGAATSGAAPWHQQAPPPPPGGASAYGYGAYPGYGAAVPGMGAPGAPPGLSVPPPPPGMPSMYYGSGSPPPPPPGEGPPPPPPSELPPPPPPSA</sequence>
<dbReference type="EMBL" id="AAHF01000002">
    <property type="protein sequence ID" value="EAL92497.1"/>
    <property type="molecule type" value="Genomic_DNA"/>
</dbReference>
<dbReference type="RefSeq" id="XP_754535.1">
    <property type="nucleotide sequence ID" value="XM_749442.1"/>
</dbReference>
<dbReference type="SMR" id="Q4WXV6"/>
<dbReference type="STRING" id="330879.Q4WXV6"/>
<dbReference type="EnsemblFungi" id="EAL92497">
    <property type="protein sequence ID" value="EAL92497"/>
    <property type="gene ID" value="AFUA_3G10840"/>
</dbReference>
<dbReference type="GeneID" id="3511814"/>
<dbReference type="KEGG" id="afm:AFUA_3G10840"/>
<dbReference type="VEuPathDB" id="FungiDB:Afu3g10840"/>
<dbReference type="eggNOG" id="KOG0119">
    <property type="taxonomic scope" value="Eukaryota"/>
</dbReference>
<dbReference type="HOGENOM" id="CLU_016864_3_0_1"/>
<dbReference type="InParanoid" id="Q4WXV6"/>
<dbReference type="OMA" id="PGMPSMY"/>
<dbReference type="OrthoDB" id="6777263at2759"/>
<dbReference type="Proteomes" id="UP000002530">
    <property type="component" value="Chromosome 3"/>
</dbReference>
<dbReference type="GO" id="GO:0000243">
    <property type="term" value="C:commitment complex"/>
    <property type="evidence" value="ECO:0007669"/>
    <property type="project" value="EnsemblFungi"/>
</dbReference>
<dbReference type="GO" id="GO:0005829">
    <property type="term" value="C:cytosol"/>
    <property type="evidence" value="ECO:0007669"/>
    <property type="project" value="EnsemblFungi"/>
</dbReference>
<dbReference type="GO" id="GO:0005634">
    <property type="term" value="C:nucleus"/>
    <property type="evidence" value="ECO:0000318"/>
    <property type="project" value="GO_Central"/>
</dbReference>
<dbReference type="GO" id="GO:0071004">
    <property type="term" value="C:U2-type prespliceosome"/>
    <property type="evidence" value="ECO:0007669"/>
    <property type="project" value="EnsemblFungi"/>
</dbReference>
<dbReference type="GO" id="GO:0003729">
    <property type="term" value="F:mRNA binding"/>
    <property type="evidence" value="ECO:0000318"/>
    <property type="project" value="GO_Central"/>
</dbReference>
<dbReference type="GO" id="GO:0008270">
    <property type="term" value="F:zinc ion binding"/>
    <property type="evidence" value="ECO:0007669"/>
    <property type="project" value="UniProtKB-KW"/>
</dbReference>
<dbReference type="GO" id="GO:0045292">
    <property type="term" value="P:mRNA cis splicing, via spliceosome"/>
    <property type="evidence" value="ECO:0007669"/>
    <property type="project" value="EnsemblFungi"/>
</dbReference>
<dbReference type="GO" id="GO:0048024">
    <property type="term" value="P:regulation of mRNA splicing, via spliceosome"/>
    <property type="evidence" value="ECO:0000318"/>
    <property type="project" value="GO_Central"/>
</dbReference>
<dbReference type="CDD" id="cd02395">
    <property type="entry name" value="KH-I_BBP"/>
    <property type="match status" value="1"/>
</dbReference>
<dbReference type="FunFam" id="4.10.60.10:FF:000030">
    <property type="entry name" value="Branchpoint-bridging protein"/>
    <property type="match status" value="1"/>
</dbReference>
<dbReference type="FunFam" id="3.30.1370.10:FF:000024">
    <property type="entry name" value="Branchpoint-bridging protein-like protein"/>
    <property type="match status" value="1"/>
</dbReference>
<dbReference type="Gene3D" id="6.10.140.1790">
    <property type="match status" value="1"/>
</dbReference>
<dbReference type="Gene3D" id="3.30.1370.10">
    <property type="entry name" value="K Homology domain, type 1"/>
    <property type="match status" value="1"/>
</dbReference>
<dbReference type="Gene3D" id="4.10.60.10">
    <property type="entry name" value="Zinc finger, CCHC-type"/>
    <property type="match status" value="1"/>
</dbReference>
<dbReference type="InterPro" id="IPR045071">
    <property type="entry name" value="BBP-like"/>
</dbReference>
<dbReference type="InterPro" id="IPR055256">
    <property type="entry name" value="KH_1_KHDC4/BBP-like"/>
</dbReference>
<dbReference type="InterPro" id="IPR004087">
    <property type="entry name" value="KH_dom"/>
</dbReference>
<dbReference type="InterPro" id="IPR036612">
    <property type="entry name" value="KH_dom_type_1_sf"/>
</dbReference>
<dbReference type="InterPro" id="IPR032570">
    <property type="entry name" value="SF1-HH"/>
</dbReference>
<dbReference type="InterPro" id="IPR047086">
    <property type="entry name" value="SF1-HH_sf"/>
</dbReference>
<dbReference type="InterPro" id="IPR001878">
    <property type="entry name" value="Znf_CCHC"/>
</dbReference>
<dbReference type="InterPro" id="IPR036875">
    <property type="entry name" value="Znf_CCHC_sf"/>
</dbReference>
<dbReference type="PANTHER" id="PTHR11208">
    <property type="entry name" value="RNA-BINDING PROTEIN RELATED"/>
    <property type="match status" value="1"/>
</dbReference>
<dbReference type="PANTHER" id="PTHR11208:SF45">
    <property type="entry name" value="SPLICING FACTOR 1"/>
    <property type="match status" value="1"/>
</dbReference>
<dbReference type="Pfam" id="PF22675">
    <property type="entry name" value="KH-I_KHDC4-BBP"/>
    <property type="match status" value="1"/>
</dbReference>
<dbReference type="Pfam" id="PF16275">
    <property type="entry name" value="SF1-HH"/>
    <property type="match status" value="1"/>
</dbReference>
<dbReference type="Pfam" id="PF00098">
    <property type="entry name" value="zf-CCHC"/>
    <property type="match status" value="2"/>
</dbReference>
<dbReference type="SMART" id="SM00322">
    <property type="entry name" value="KH"/>
    <property type="match status" value="1"/>
</dbReference>
<dbReference type="SMART" id="SM00343">
    <property type="entry name" value="ZnF_C2HC"/>
    <property type="match status" value="2"/>
</dbReference>
<dbReference type="SUPFAM" id="SSF54791">
    <property type="entry name" value="Eukaryotic type KH-domain (KH-domain type I)"/>
    <property type="match status" value="1"/>
</dbReference>
<dbReference type="SUPFAM" id="SSF57756">
    <property type="entry name" value="Retrovirus zinc finger-like domains"/>
    <property type="match status" value="1"/>
</dbReference>
<dbReference type="PROSITE" id="PS50084">
    <property type="entry name" value="KH_TYPE_1"/>
    <property type="match status" value="1"/>
</dbReference>
<dbReference type="PROSITE" id="PS50158">
    <property type="entry name" value="ZF_CCHC"/>
    <property type="match status" value="2"/>
</dbReference>
<protein>
    <recommendedName>
        <fullName>Branchpoint-bridging protein</fullName>
    </recommendedName>
</protein>
<organism>
    <name type="scientific">Aspergillus fumigatus (strain ATCC MYA-4609 / CBS 101355 / FGSC A1100 / Af293)</name>
    <name type="common">Neosartorya fumigata</name>
    <dbReference type="NCBI Taxonomy" id="330879"/>
    <lineage>
        <taxon>Eukaryota</taxon>
        <taxon>Fungi</taxon>
        <taxon>Dikarya</taxon>
        <taxon>Ascomycota</taxon>
        <taxon>Pezizomycotina</taxon>
        <taxon>Eurotiomycetes</taxon>
        <taxon>Eurotiomycetidae</taxon>
        <taxon>Eurotiales</taxon>
        <taxon>Aspergillaceae</taxon>
        <taxon>Aspergillus</taxon>
        <taxon>Aspergillus subgen. Fumigati</taxon>
    </lineage>
</organism>